<accession>Q5L8A7</accession>
<reference key="1">
    <citation type="journal article" date="2005" name="Science">
        <title>Extensive DNA inversions in the B. fragilis genome control variable gene expression.</title>
        <authorList>
            <person name="Cerdeno-Tarraga A.-M."/>
            <person name="Patrick S."/>
            <person name="Crossman L.C."/>
            <person name="Blakely G."/>
            <person name="Abratt V."/>
            <person name="Lennard N."/>
            <person name="Poxton I."/>
            <person name="Duerden B."/>
            <person name="Harris B."/>
            <person name="Quail M.A."/>
            <person name="Barron A."/>
            <person name="Clark L."/>
            <person name="Corton C."/>
            <person name="Doggett J."/>
            <person name="Holden M.T.G."/>
            <person name="Larke N."/>
            <person name="Line A."/>
            <person name="Lord A."/>
            <person name="Norbertczak H."/>
            <person name="Ormond D."/>
            <person name="Price C."/>
            <person name="Rabbinowitsch E."/>
            <person name="Woodward J."/>
            <person name="Barrell B.G."/>
            <person name="Parkhill J."/>
        </authorList>
    </citation>
    <scope>NUCLEOTIDE SEQUENCE [LARGE SCALE GENOMIC DNA]</scope>
    <source>
        <strain>ATCC 25285 / DSM 2151 / CCUG 4856 / JCM 11019 / LMG 10263 / NCTC 9343 / Onslow / VPI 2553 / EN-2</strain>
    </source>
</reference>
<organism>
    <name type="scientific">Bacteroides fragilis (strain ATCC 25285 / DSM 2151 / CCUG 4856 / JCM 11019 / LMG 10263 / NCTC 9343 / Onslow / VPI 2553 / EN-2)</name>
    <dbReference type="NCBI Taxonomy" id="272559"/>
    <lineage>
        <taxon>Bacteria</taxon>
        <taxon>Pseudomonadati</taxon>
        <taxon>Bacteroidota</taxon>
        <taxon>Bacteroidia</taxon>
        <taxon>Bacteroidales</taxon>
        <taxon>Bacteroidaceae</taxon>
        <taxon>Bacteroides</taxon>
    </lineage>
</organism>
<gene>
    <name evidence="1" type="primary">fusA</name>
    <name type="ordered locus">BF4005</name>
</gene>
<evidence type="ECO:0000255" key="1">
    <source>
        <dbReference type="HAMAP-Rule" id="MF_00054"/>
    </source>
</evidence>
<evidence type="ECO:0000256" key="2">
    <source>
        <dbReference type="SAM" id="MobiDB-lite"/>
    </source>
</evidence>
<keyword id="KW-0963">Cytoplasm</keyword>
<keyword id="KW-0251">Elongation factor</keyword>
<keyword id="KW-0342">GTP-binding</keyword>
<keyword id="KW-0547">Nucleotide-binding</keyword>
<keyword id="KW-0648">Protein biosynthesis</keyword>
<comment type="function">
    <text evidence="1">Catalyzes the GTP-dependent ribosomal translocation step during translation elongation. During this step, the ribosome changes from the pre-translocational (PRE) to the post-translocational (POST) state as the newly formed A-site-bound peptidyl-tRNA and P-site-bound deacylated tRNA move to the P and E sites, respectively. Catalyzes the coordinated movement of the two tRNA molecules, the mRNA and conformational changes in the ribosome.</text>
</comment>
<comment type="subcellular location">
    <subcellularLocation>
        <location evidence="1">Cytoplasm</location>
    </subcellularLocation>
</comment>
<comment type="similarity">
    <text evidence="1">Belongs to the TRAFAC class translation factor GTPase superfamily. Classic translation factor GTPase family. EF-G/EF-2 subfamily.</text>
</comment>
<dbReference type="EMBL" id="CR626927">
    <property type="protein sequence ID" value="CAH09681.1"/>
    <property type="molecule type" value="Genomic_DNA"/>
</dbReference>
<dbReference type="RefSeq" id="WP_005791539.1">
    <property type="nucleotide sequence ID" value="NZ_UFTH01000001.1"/>
</dbReference>
<dbReference type="SMR" id="Q5L8A7"/>
<dbReference type="PaxDb" id="272559-BF9343_3900"/>
<dbReference type="GeneID" id="60366821"/>
<dbReference type="KEGG" id="bfs:BF9343_3900"/>
<dbReference type="eggNOG" id="COG0480">
    <property type="taxonomic scope" value="Bacteria"/>
</dbReference>
<dbReference type="HOGENOM" id="CLU_002794_4_1_10"/>
<dbReference type="Proteomes" id="UP000006731">
    <property type="component" value="Chromosome"/>
</dbReference>
<dbReference type="GO" id="GO:0005737">
    <property type="term" value="C:cytoplasm"/>
    <property type="evidence" value="ECO:0007669"/>
    <property type="project" value="UniProtKB-SubCell"/>
</dbReference>
<dbReference type="GO" id="GO:0005525">
    <property type="term" value="F:GTP binding"/>
    <property type="evidence" value="ECO:0007669"/>
    <property type="project" value="UniProtKB-UniRule"/>
</dbReference>
<dbReference type="GO" id="GO:0003924">
    <property type="term" value="F:GTPase activity"/>
    <property type="evidence" value="ECO:0007669"/>
    <property type="project" value="InterPro"/>
</dbReference>
<dbReference type="GO" id="GO:0003746">
    <property type="term" value="F:translation elongation factor activity"/>
    <property type="evidence" value="ECO:0007669"/>
    <property type="project" value="UniProtKB-UniRule"/>
</dbReference>
<dbReference type="GO" id="GO:0032790">
    <property type="term" value="P:ribosome disassembly"/>
    <property type="evidence" value="ECO:0007669"/>
    <property type="project" value="TreeGrafter"/>
</dbReference>
<dbReference type="CDD" id="cd01886">
    <property type="entry name" value="EF-G"/>
    <property type="match status" value="1"/>
</dbReference>
<dbReference type="CDD" id="cd16262">
    <property type="entry name" value="EFG_III"/>
    <property type="match status" value="1"/>
</dbReference>
<dbReference type="CDD" id="cd01434">
    <property type="entry name" value="EFG_mtEFG1_IV"/>
    <property type="match status" value="1"/>
</dbReference>
<dbReference type="CDD" id="cd03713">
    <property type="entry name" value="EFG_mtEFG_C"/>
    <property type="match status" value="1"/>
</dbReference>
<dbReference type="CDD" id="cd04088">
    <property type="entry name" value="EFG_mtEFG_II"/>
    <property type="match status" value="1"/>
</dbReference>
<dbReference type="FunFam" id="2.40.30.10:FF:000006">
    <property type="entry name" value="Elongation factor G"/>
    <property type="match status" value="1"/>
</dbReference>
<dbReference type="FunFam" id="3.30.230.10:FF:000003">
    <property type="entry name" value="Elongation factor G"/>
    <property type="match status" value="1"/>
</dbReference>
<dbReference type="FunFam" id="3.30.70.240:FF:000001">
    <property type="entry name" value="Elongation factor G"/>
    <property type="match status" value="1"/>
</dbReference>
<dbReference type="FunFam" id="3.30.70.870:FF:000001">
    <property type="entry name" value="Elongation factor G"/>
    <property type="match status" value="1"/>
</dbReference>
<dbReference type="FunFam" id="3.40.50.300:FF:000029">
    <property type="entry name" value="Elongation factor G"/>
    <property type="match status" value="1"/>
</dbReference>
<dbReference type="Gene3D" id="3.30.230.10">
    <property type="match status" value="1"/>
</dbReference>
<dbReference type="Gene3D" id="3.30.70.240">
    <property type="match status" value="1"/>
</dbReference>
<dbReference type="Gene3D" id="3.30.70.870">
    <property type="entry name" value="Elongation Factor G (Translational Gtpase), domain 3"/>
    <property type="match status" value="1"/>
</dbReference>
<dbReference type="Gene3D" id="3.40.50.300">
    <property type="entry name" value="P-loop containing nucleotide triphosphate hydrolases"/>
    <property type="match status" value="1"/>
</dbReference>
<dbReference type="Gene3D" id="2.40.30.10">
    <property type="entry name" value="Translation factors"/>
    <property type="match status" value="1"/>
</dbReference>
<dbReference type="HAMAP" id="MF_00054_B">
    <property type="entry name" value="EF_G_EF_2_B"/>
    <property type="match status" value="1"/>
</dbReference>
<dbReference type="InterPro" id="IPR041095">
    <property type="entry name" value="EFG_II"/>
</dbReference>
<dbReference type="InterPro" id="IPR009022">
    <property type="entry name" value="EFG_III"/>
</dbReference>
<dbReference type="InterPro" id="IPR035647">
    <property type="entry name" value="EFG_III/V"/>
</dbReference>
<dbReference type="InterPro" id="IPR047872">
    <property type="entry name" value="EFG_IV"/>
</dbReference>
<dbReference type="InterPro" id="IPR035649">
    <property type="entry name" value="EFG_V"/>
</dbReference>
<dbReference type="InterPro" id="IPR000640">
    <property type="entry name" value="EFG_V-like"/>
</dbReference>
<dbReference type="InterPro" id="IPR004161">
    <property type="entry name" value="EFTu-like_2"/>
</dbReference>
<dbReference type="InterPro" id="IPR031157">
    <property type="entry name" value="G_TR_CS"/>
</dbReference>
<dbReference type="InterPro" id="IPR027417">
    <property type="entry name" value="P-loop_NTPase"/>
</dbReference>
<dbReference type="InterPro" id="IPR020568">
    <property type="entry name" value="Ribosomal_Su5_D2-typ_SF"/>
</dbReference>
<dbReference type="InterPro" id="IPR014721">
    <property type="entry name" value="Ribsml_uS5_D2-typ_fold_subgr"/>
</dbReference>
<dbReference type="InterPro" id="IPR005225">
    <property type="entry name" value="Small_GTP-bd"/>
</dbReference>
<dbReference type="InterPro" id="IPR000795">
    <property type="entry name" value="T_Tr_GTP-bd_dom"/>
</dbReference>
<dbReference type="InterPro" id="IPR009000">
    <property type="entry name" value="Transl_B-barrel_sf"/>
</dbReference>
<dbReference type="InterPro" id="IPR004540">
    <property type="entry name" value="Transl_elong_EFG/EF2"/>
</dbReference>
<dbReference type="InterPro" id="IPR005517">
    <property type="entry name" value="Transl_elong_EFG/EF2_IV"/>
</dbReference>
<dbReference type="NCBIfam" id="TIGR00484">
    <property type="entry name" value="EF-G"/>
    <property type="match status" value="1"/>
</dbReference>
<dbReference type="NCBIfam" id="NF009381">
    <property type="entry name" value="PRK12740.1-5"/>
    <property type="match status" value="1"/>
</dbReference>
<dbReference type="NCBIfam" id="TIGR00231">
    <property type="entry name" value="small_GTP"/>
    <property type="match status" value="1"/>
</dbReference>
<dbReference type="PANTHER" id="PTHR43261:SF1">
    <property type="entry name" value="RIBOSOME-RELEASING FACTOR 2, MITOCHONDRIAL"/>
    <property type="match status" value="1"/>
</dbReference>
<dbReference type="PANTHER" id="PTHR43261">
    <property type="entry name" value="TRANSLATION ELONGATION FACTOR G-RELATED"/>
    <property type="match status" value="1"/>
</dbReference>
<dbReference type="Pfam" id="PF00679">
    <property type="entry name" value="EFG_C"/>
    <property type="match status" value="1"/>
</dbReference>
<dbReference type="Pfam" id="PF14492">
    <property type="entry name" value="EFG_III"/>
    <property type="match status" value="1"/>
</dbReference>
<dbReference type="Pfam" id="PF03764">
    <property type="entry name" value="EFG_IV"/>
    <property type="match status" value="1"/>
</dbReference>
<dbReference type="Pfam" id="PF00009">
    <property type="entry name" value="GTP_EFTU"/>
    <property type="match status" value="1"/>
</dbReference>
<dbReference type="Pfam" id="PF03144">
    <property type="entry name" value="GTP_EFTU_D2"/>
    <property type="match status" value="1"/>
</dbReference>
<dbReference type="PRINTS" id="PR00315">
    <property type="entry name" value="ELONGATNFCT"/>
</dbReference>
<dbReference type="SMART" id="SM00838">
    <property type="entry name" value="EFG_C"/>
    <property type="match status" value="1"/>
</dbReference>
<dbReference type="SMART" id="SM00889">
    <property type="entry name" value="EFG_IV"/>
    <property type="match status" value="1"/>
</dbReference>
<dbReference type="SUPFAM" id="SSF54980">
    <property type="entry name" value="EF-G C-terminal domain-like"/>
    <property type="match status" value="2"/>
</dbReference>
<dbReference type="SUPFAM" id="SSF52540">
    <property type="entry name" value="P-loop containing nucleoside triphosphate hydrolases"/>
    <property type="match status" value="1"/>
</dbReference>
<dbReference type="SUPFAM" id="SSF54211">
    <property type="entry name" value="Ribosomal protein S5 domain 2-like"/>
    <property type="match status" value="1"/>
</dbReference>
<dbReference type="SUPFAM" id="SSF50447">
    <property type="entry name" value="Translation proteins"/>
    <property type="match status" value="1"/>
</dbReference>
<dbReference type="PROSITE" id="PS00301">
    <property type="entry name" value="G_TR_1"/>
    <property type="match status" value="1"/>
</dbReference>
<dbReference type="PROSITE" id="PS51722">
    <property type="entry name" value="G_TR_2"/>
    <property type="match status" value="1"/>
</dbReference>
<protein>
    <recommendedName>
        <fullName evidence="1">Elongation factor G</fullName>
        <shortName evidence="1">EF-G</shortName>
    </recommendedName>
</protein>
<sequence>MAKNDLHLTRNIGIMAHIDAGKTTTSERILFYTGLTHKIGEVHDGAATMDWMEQEQERGITITSAATTTRWKYAGDTYKINLIDTPGHVDFTAEVERSLRILDGAVAAYCAVGGVEPQSETVWRQADKYNVPRIAYVNKMDRSGADFFEVVRQMKAVLGANPCPVVIPIGAEENFKGLVDLIKMKAIYWHDETMGADYTIEEIPANLVDEANEWRDKMLEKVAEFDDALMEKYFDDPSTITEEEVLRALRNATVQMAVVPMLCGSSFKNKGVQTLLDYVCAFLPSPLDAENVVGTNPDTGAEEDRKPSEDDKTSALAFKIATDPYVGRLTFFRVYSGKIEAGSYIYNSRSGKKERVSRLFQMHSNKQNPVEVIGAGDIGAGVGFKDIHTGDTLCDETAPIVLESMDFPEPVIGIAVEPKTQKDMDKLSNGLAKLAEEDPTFTVKTDEQTGQTVISGMGELHLDIIIDRLKREFKVECNQGKPQVNYKEAITKTVNLREVYKKQSGGRGKFADIIVNIGPVDEDFTQGGLQFVDEVKGGNIPKEFIPSVQKGFQTAMKNGVLAGYPLDSLKVTLVDGSFHPVDSDQLSFEICAIQAYKNACAKAGPVLMEPIMKLEVVTPEENMGDVIGDLNKRRGQVEGMESSRSGARIVKAMVPLAEMFGYVTALRTITSGRATSSMVYSHHAQVSSSIAKAVLEEVKGRADLL</sequence>
<proteinExistence type="inferred from homology"/>
<feature type="chain" id="PRO_0000225193" description="Elongation factor G">
    <location>
        <begin position="1"/>
        <end position="705"/>
    </location>
</feature>
<feature type="domain" description="tr-type G">
    <location>
        <begin position="7"/>
        <end position="287"/>
    </location>
</feature>
<feature type="region of interest" description="Disordered" evidence="2">
    <location>
        <begin position="291"/>
        <end position="312"/>
    </location>
</feature>
<feature type="compositionally biased region" description="Basic and acidic residues" evidence="2">
    <location>
        <begin position="302"/>
        <end position="312"/>
    </location>
</feature>
<feature type="binding site" evidence="1">
    <location>
        <begin position="16"/>
        <end position="23"/>
    </location>
    <ligand>
        <name>GTP</name>
        <dbReference type="ChEBI" id="CHEBI:37565"/>
    </ligand>
</feature>
<feature type="binding site" evidence="1">
    <location>
        <begin position="84"/>
        <end position="88"/>
    </location>
    <ligand>
        <name>GTP</name>
        <dbReference type="ChEBI" id="CHEBI:37565"/>
    </ligand>
</feature>
<feature type="binding site" evidence="1">
    <location>
        <begin position="138"/>
        <end position="141"/>
    </location>
    <ligand>
        <name>GTP</name>
        <dbReference type="ChEBI" id="CHEBI:37565"/>
    </ligand>
</feature>
<name>EFG_BACFN</name>